<dbReference type="EC" id="2.7.7.3" evidence="1"/>
<dbReference type="EMBL" id="CP000828">
    <property type="protein sequence ID" value="ABW29049.1"/>
    <property type="molecule type" value="Genomic_DNA"/>
</dbReference>
<dbReference type="RefSeq" id="WP_012164399.1">
    <property type="nucleotide sequence ID" value="NC_009925.1"/>
</dbReference>
<dbReference type="SMR" id="B0CAI3"/>
<dbReference type="STRING" id="329726.AM1_4068"/>
<dbReference type="KEGG" id="amr:AM1_4068"/>
<dbReference type="eggNOG" id="COG0669">
    <property type="taxonomic scope" value="Bacteria"/>
</dbReference>
<dbReference type="HOGENOM" id="CLU_100149_0_1_3"/>
<dbReference type="OrthoDB" id="9806661at2"/>
<dbReference type="UniPathway" id="UPA00241">
    <property type="reaction ID" value="UER00355"/>
</dbReference>
<dbReference type="Proteomes" id="UP000000268">
    <property type="component" value="Chromosome"/>
</dbReference>
<dbReference type="GO" id="GO:0005737">
    <property type="term" value="C:cytoplasm"/>
    <property type="evidence" value="ECO:0007669"/>
    <property type="project" value="UniProtKB-SubCell"/>
</dbReference>
<dbReference type="GO" id="GO:0005524">
    <property type="term" value="F:ATP binding"/>
    <property type="evidence" value="ECO:0007669"/>
    <property type="project" value="UniProtKB-KW"/>
</dbReference>
<dbReference type="GO" id="GO:0004595">
    <property type="term" value="F:pantetheine-phosphate adenylyltransferase activity"/>
    <property type="evidence" value="ECO:0007669"/>
    <property type="project" value="UniProtKB-UniRule"/>
</dbReference>
<dbReference type="GO" id="GO:0015937">
    <property type="term" value="P:coenzyme A biosynthetic process"/>
    <property type="evidence" value="ECO:0007669"/>
    <property type="project" value="UniProtKB-UniRule"/>
</dbReference>
<dbReference type="CDD" id="cd02163">
    <property type="entry name" value="PPAT"/>
    <property type="match status" value="1"/>
</dbReference>
<dbReference type="Gene3D" id="3.40.50.620">
    <property type="entry name" value="HUPs"/>
    <property type="match status" value="1"/>
</dbReference>
<dbReference type="HAMAP" id="MF_00151">
    <property type="entry name" value="PPAT_bact"/>
    <property type="match status" value="1"/>
</dbReference>
<dbReference type="InterPro" id="IPR004821">
    <property type="entry name" value="Cyt_trans-like"/>
</dbReference>
<dbReference type="InterPro" id="IPR001980">
    <property type="entry name" value="PPAT"/>
</dbReference>
<dbReference type="InterPro" id="IPR014729">
    <property type="entry name" value="Rossmann-like_a/b/a_fold"/>
</dbReference>
<dbReference type="NCBIfam" id="TIGR01510">
    <property type="entry name" value="coaD_prev_kdtB"/>
    <property type="match status" value="1"/>
</dbReference>
<dbReference type="NCBIfam" id="TIGR00125">
    <property type="entry name" value="cyt_tran_rel"/>
    <property type="match status" value="1"/>
</dbReference>
<dbReference type="PANTHER" id="PTHR21342">
    <property type="entry name" value="PHOSPHOPANTETHEINE ADENYLYLTRANSFERASE"/>
    <property type="match status" value="1"/>
</dbReference>
<dbReference type="PANTHER" id="PTHR21342:SF1">
    <property type="entry name" value="PHOSPHOPANTETHEINE ADENYLYLTRANSFERASE"/>
    <property type="match status" value="1"/>
</dbReference>
<dbReference type="Pfam" id="PF01467">
    <property type="entry name" value="CTP_transf_like"/>
    <property type="match status" value="1"/>
</dbReference>
<dbReference type="PRINTS" id="PR01020">
    <property type="entry name" value="LPSBIOSNTHSS"/>
</dbReference>
<dbReference type="SUPFAM" id="SSF52374">
    <property type="entry name" value="Nucleotidylyl transferase"/>
    <property type="match status" value="1"/>
</dbReference>
<sequence>MIAVYPGSFDPITLGHLDIIERGCNLFGSVIVAVARNPNKAPLFSVQQRIQQIQTCTQHLANLELDTFDTLTVTYTQKRQAQVLLRGLRALSDFEYELQMAHTNHSLSPHIETVFLATSNEYSFLSSSLVKEIAKFGGSVAHLVPENVAIELEECFTKTPPSVSIPPPTAPSTPTD</sequence>
<reference key="1">
    <citation type="journal article" date="2008" name="Proc. Natl. Acad. Sci. U.S.A.">
        <title>Niche adaptation and genome expansion in the chlorophyll d-producing cyanobacterium Acaryochloris marina.</title>
        <authorList>
            <person name="Swingley W.D."/>
            <person name="Chen M."/>
            <person name="Cheung P.C."/>
            <person name="Conrad A.L."/>
            <person name="Dejesa L.C."/>
            <person name="Hao J."/>
            <person name="Honchak B.M."/>
            <person name="Karbach L.E."/>
            <person name="Kurdoglu A."/>
            <person name="Lahiri S."/>
            <person name="Mastrian S.D."/>
            <person name="Miyashita H."/>
            <person name="Page L."/>
            <person name="Ramakrishna P."/>
            <person name="Satoh S."/>
            <person name="Sattley W.M."/>
            <person name="Shimada Y."/>
            <person name="Taylor H.L."/>
            <person name="Tomo T."/>
            <person name="Tsuchiya T."/>
            <person name="Wang Z.T."/>
            <person name="Raymond J."/>
            <person name="Mimuro M."/>
            <person name="Blankenship R.E."/>
            <person name="Touchman J.W."/>
        </authorList>
    </citation>
    <scope>NUCLEOTIDE SEQUENCE [LARGE SCALE GENOMIC DNA]</scope>
    <source>
        <strain>MBIC 11017</strain>
    </source>
</reference>
<protein>
    <recommendedName>
        <fullName evidence="1">Phosphopantetheine adenylyltransferase</fullName>
        <ecNumber evidence="1">2.7.7.3</ecNumber>
    </recommendedName>
    <alternativeName>
        <fullName evidence="1">Dephospho-CoA pyrophosphorylase</fullName>
    </alternativeName>
    <alternativeName>
        <fullName evidence="1">Pantetheine-phosphate adenylyltransferase</fullName>
        <shortName evidence="1">PPAT</shortName>
    </alternativeName>
</protein>
<keyword id="KW-0067">ATP-binding</keyword>
<keyword id="KW-0173">Coenzyme A biosynthesis</keyword>
<keyword id="KW-0963">Cytoplasm</keyword>
<keyword id="KW-0460">Magnesium</keyword>
<keyword id="KW-0547">Nucleotide-binding</keyword>
<keyword id="KW-0548">Nucleotidyltransferase</keyword>
<keyword id="KW-1185">Reference proteome</keyword>
<keyword id="KW-0808">Transferase</keyword>
<name>COAD_ACAM1</name>
<feature type="chain" id="PRO_1000076749" description="Phosphopantetheine adenylyltransferase">
    <location>
        <begin position="1"/>
        <end position="176"/>
    </location>
</feature>
<feature type="binding site" evidence="1">
    <location>
        <begin position="8"/>
        <end position="9"/>
    </location>
    <ligand>
        <name>ATP</name>
        <dbReference type="ChEBI" id="CHEBI:30616"/>
    </ligand>
</feature>
<feature type="binding site" evidence="1">
    <location>
        <position position="8"/>
    </location>
    <ligand>
        <name>substrate</name>
    </ligand>
</feature>
<feature type="binding site" evidence="1">
    <location>
        <position position="16"/>
    </location>
    <ligand>
        <name>ATP</name>
        <dbReference type="ChEBI" id="CHEBI:30616"/>
    </ligand>
</feature>
<feature type="binding site" evidence="1">
    <location>
        <position position="40"/>
    </location>
    <ligand>
        <name>substrate</name>
    </ligand>
</feature>
<feature type="binding site" evidence="1">
    <location>
        <position position="72"/>
    </location>
    <ligand>
        <name>substrate</name>
    </ligand>
</feature>
<feature type="binding site" evidence="1">
    <location>
        <position position="86"/>
    </location>
    <ligand>
        <name>substrate</name>
    </ligand>
</feature>
<feature type="binding site" evidence="1">
    <location>
        <begin position="87"/>
        <end position="89"/>
    </location>
    <ligand>
        <name>ATP</name>
        <dbReference type="ChEBI" id="CHEBI:30616"/>
    </ligand>
</feature>
<feature type="binding site" evidence="1">
    <location>
        <position position="97"/>
    </location>
    <ligand>
        <name>ATP</name>
        <dbReference type="ChEBI" id="CHEBI:30616"/>
    </ligand>
</feature>
<feature type="binding site" evidence="1">
    <location>
        <begin position="122"/>
        <end position="128"/>
    </location>
    <ligand>
        <name>ATP</name>
        <dbReference type="ChEBI" id="CHEBI:30616"/>
    </ligand>
</feature>
<feature type="site" description="Transition state stabilizer" evidence="1">
    <location>
        <position position="16"/>
    </location>
</feature>
<comment type="function">
    <text evidence="1">Reversibly transfers an adenylyl group from ATP to 4'-phosphopantetheine, yielding dephospho-CoA (dPCoA) and pyrophosphate.</text>
</comment>
<comment type="catalytic activity">
    <reaction evidence="1">
        <text>(R)-4'-phosphopantetheine + ATP + H(+) = 3'-dephospho-CoA + diphosphate</text>
        <dbReference type="Rhea" id="RHEA:19801"/>
        <dbReference type="ChEBI" id="CHEBI:15378"/>
        <dbReference type="ChEBI" id="CHEBI:30616"/>
        <dbReference type="ChEBI" id="CHEBI:33019"/>
        <dbReference type="ChEBI" id="CHEBI:57328"/>
        <dbReference type="ChEBI" id="CHEBI:61723"/>
        <dbReference type="EC" id="2.7.7.3"/>
    </reaction>
</comment>
<comment type="cofactor">
    <cofactor evidence="1">
        <name>Mg(2+)</name>
        <dbReference type="ChEBI" id="CHEBI:18420"/>
    </cofactor>
</comment>
<comment type="pathway">
    <text evidence="1">Cofactor biosynthesis; coenzyme A biosynthesis; CoA from (R)-pantothenate: step 4/5.</text>
</comment>
<comment type="subunit">
    <text evidence="1">Homohexamer.</text>
</comment>
<comment type="subcellular location">
    <subcellularLocation>
        <location evidence="1">Cytoplasm</location>
    </subcellularLocation>
</comment>
<comment type="similarity">
    <text evidence="1">Belongs to the bacterial CoaD family.</text>
</comment>
<proteinExistence type="inferred from homology"/>
<gene>
    <name evidence="1" type="primary">coaD</name>
    <name type="ordered locus">AM1_4068</name>
</gene>
<evidence type="ECO:0000255" key="1">
    <source>
        <dbReference type="HAMAP-Rule" id="MF_00151"/>
    </source>
</evidence>
<accession>B0CAI3</accession>
<organism>
    <name type="scientific">Acaryochloris marina (strain MBIC 11017)</name>
    <dbReference type="NCBI Taxonomy" id="329726"/>
    <lineage>
        <taxon>Bacteria</taxon>
        <taxon>Bacillati</taxon>
        <taxon>Cyanobacteriota</taxon>
        <taxon>Cyanophyceae</taxon>
        <taxon>Acaryochloridales</taxon>
        <taxon>Acaryochloridaceae</taxon>
        <taxon>Acaryochloris</taxon>
    </lineage>
</organism>